<name>MREB_CAUVN</name>
<organism>
    <name type="scientific">Caulobacter vibrioides (strain NA1000 / CB15N)</name>
    <name type="common">Caulobacter crescentus</name>
    <dbReference type="NCBI Taxonomy" id="565050"/>
    <lineage>
        <taxon>Bacteria</taxon>
        <taxon>Pseudomonadati</taxon>
        <taxon>Pseudomonadota</taxon>
        <taxon>Alphaproteobacteria</taxon>
        <taxon>Caulobacterales</taxon>
        <taxon>Caulobacteraceae</taxon>
        <taxon>Caulobacter</taxon>
    </lineage>
</organism>
<gene>
    <name evidence="2 10" type="primary">mreB</name>
    <name evidence="10" type="ordered locus">CCNA_01612</name>
</gene>
<sequence>MFSSLFGVISNDIAIDLGTANTLIYQKGKGIVLNEPSVVALRNVGGRKVVHAVGIEAKQMLGRTPGHMEAIRPMRDGVIADFEVAEEMIKYFIRKVHNRKGFVNPKVIVCVPSGATAVERRAINDSCLNAGARRVGLIDEPMAAAIGAGLPIHEPTGSMVVDIGGGTTEVAVLSLSGIVYSRSVRVGGDKMDEAIISYMRRHHNLLIGETTAERIKKEIGTARAPADGEGLSIDVKGRDLMQGVPREVRISEKQAADALAEPVGQIVEAVKVALEATPPELASDIADKGIMLTGGGALLRGLDAEIRDHTGLPVTVADDPLSCVALGCGKVLEHPKWMKGVLESTLA</sequence>
<reference key="1">
    <citation type="journal article" date="2010" name="J. Bacteriol.">
        <title>The genetic basis of laboratory adaptation in Caulobacter crescentus.</title>
        <authorList>
            <person name="Marks M.E."/>
            <person name="Castro-Rojas C.M."/>
            <person name="Teiling C."/>
            <person name="Du L."/>
            <person name="Kapatral V."/>
            <person name="Walunas T.L."/>
            <person name="Crosson S."/>
        </authorList>
    </citation>
    <scope>NUCLEOTIDE SEQUENCE [LARGE SCALE GENOMIC DNA]</scope>
    <source>
        <strain>NA1000 / CB15N</strain>
    </source>
</reference>
<reference key="2">
    <citation type="journal article" date="2004" name="Mol. Microbiol.">
        <title>MreB, the cell shape-determining bacterial actin homologue, co-ordinates cell wall morphogenesis in Caulobacter crescentus.</title>
        <authorList>
            <person name="Figge R.M."/>
            <person name="Divakaruni A.V."/>
            <person name="Gober J.W."/>
        </authorList>
    </citation>
    <scope>FUNCTION</scope>
    <scope>SUBCELLULAR LOCATION</scope>
    <scope>DISRUPTION PHENOTYPE</scope>
    <source>
        <strain>NA1000 / CB15N / LS107</strain>
    </source>
</reference>
<reference key="3">
    <citation type="journal article" date="2005" name="Cell">
        <title>MreB actin-mediated segregation of a specific region of a bacterial chromosome.</title>
        <authorList>
            <person name="Gitai Z."/>
            <person name="Dye N.A."/>
            <person name="Reisenauer A."/>
            <person name="Wachi M."/>
            <person name="Shapiro L."/>
        </authorList>
    </citation>
    <scope>FUNCTION</scope>
    <source>
        <strain>NA1000 / CB15N</strain>
    </source>
</reference>
<reference key="4">
    <citation type="journal article" date="2007" name="Mol. Microbiol.">
        <title>The cell shape proteins MreB and MreC control cell morphogenesis by positioning cell wall synthetic complexes.</title>
        <authorList>
            <person name="Divakaruni A.V."/>
            <person name="Baida C."/>
            <person name="White C.L."/>
            <person name="Gober J.W."/>
        </authorList>
    </citation>
    <scope>FUNCTION</scope>
    <source>
        <strain>NA1000 / CB15N / LS107</strain>
    </source>
</reference>
<reference evidence="11 12 13 14 15 16 17 18 19" key="5">
    <citation type="journal article" date="2014" name="Elife">
        <title>Bacterial actin MreB forms antiparallel double filaments.</title>
        <authorList>
            <person name="van den Ent F."/>
            <person name="Izore T."/>
            <person name="Bharat T.A."/>
            <person name="Johnson C.M."/>
            <person name="Lowe J."/>
        </authorList>
    </citation>
    <scope>X-RAY CRYSTALLOGRAPHY (1.50 ANGSTROMS) OF 9-347 IN COMPLEXES WITH ADP AND ATP ANALOG</scope>
    <scope>FUNCTION</scope>
    <scope>SUBUNIT</scope>
</reference>
<feature type="chain" id="PRO_0000445736" description="Cell shape-determining protein MreB">
    <location>
        <begin position="1"/>
        <end position="347"/>
    </location>
</feature>
<feature type="binding site" evidence="2 9">
    <location>
        <begin position="19"/>
        <end position="21"/>
    </location>
    <ligand>
        <name>ATP</name>
        <dbReference type="ChEBI" id="CHEBI:30616"/>
    </ligand>
</feature>
<feature type="binding site" evidence="2 9">
    <location>
        <begin position="165"/>
        <end position="167"/>
    </location>
    <ligand>
        <name>ATP</name>
        <dbReference type="ChEBI" id="CHEBI:30616"/>
    </ligand>
</feature>
<feature type="binding site" evidence="2 9">
    <location>
        <begin position="213"/>
        <end position="216"/>
    </location>
    <ligand>
        <name>ATP</name>
        <dbReference type="ChEBI" id="CHEBI:30616"/>
    </ligand>
</feature>
<feature type="binding site" evidence="2 9">
    <location>
        <begin position="295"/>
        <end position="298"/>
    </location>
    <ligand>
        <name>ATP</name>
        <dbReference type="ChEBI" id="CHEBI:30616"/>
    </ligand>
</feature>
<feature type="strand" evidence="20">
    <location>
        <begin position="13"/>
        <end position="17"/>
    </location>
</feature>
<feature type="strand" evidence="20">
    <location>
        <begin position="19"/>
        <end position="26"/>
    </location>
</feature>
<feature type="turn" evidence="20">
    <location>
        <begin position="27"/>
        <end position="29"/>
    </location>
</feature>
<feature type="strand" evidence="20">
    <location>
        <begin position="30"/>
        <end position="37"/>
    </location>
</feature>
<feature type="strand" evidence="20">
    <location>
        <begin position="39"/>
        <end position="44"/>
    </location>
</feature>
<feature type="strand" evidence="20">
    <location>
        <begin position="47"/>
        <end position="53"/>
    </location>
</feature>
<feature type="helix" evidence="20">
    <location>
        <begin position="55"/>
        <end position="60"/>
    </location>
</feature>
<feature type="strand" evidence="23">
    <location>
        <begin position="61"/>
        <end position="63"/>
    </location>
</feature>
<feature type="strand" evidence="20">
    <location>
        <begin position="68"/>
        <end position="71"/>
    </location>
</feature>
<feature type="turn" evidence="20">
    <location>
        <begin position="73"/>
        <end position="76"/>
    </location>
</feature>
<feature type="strand" evidence="21">
    <location>
        <begin position="78"/>
        <end position="81"/>
    </location>
</feature>
<feature type="helix" evidence="20">
    <location>
        <begin position="82"/>
        <end position="96"/>
    </location>
</feature>
<feature type="strand" evidence="20">
    <location>
        <begin position="106"/>
        <end position="111"/>
    </location>
</feature>
<feature type="helix" evidence="20">
    <location>
        <begin position="117"/>
        <end position="129"/>
    </location>
</feature>
<feature type="strand" evidence="20">
    <location>
        <begin position="133"/>
        <end position="139"/>
    </location>
</feature>
<feature type="helix" evidence="20">
    <location>
        <begin position="140"/>
        <end position="147"/>
    </location>
</feature>
<feature type="strand" evidence="20">
    <location>
        <begin position="154"/>
        <end position="156"/>
    </location>
</feature>
<feature type="strand" evidence="20">
    <location>
        <begin position="158"/>
        <end position="163"/>
    </location>
</feature>
<feature type="strand" evidence="20">
    <location>
        <begin position="168"/>
        <end position="174"/>
    </location>
</feature>
<feature type="strand" evidence="20">
    <location>
        <begin position="177"/>
        <end position="185"/>
    </location>
</feature>
<feature type="helix" evidence="20">
    <location>
        <begin position="188"/>
        <end position="203"/>
    </location>
</feature>
<feature type="helix" evidence="20">
    <location>
        <begin position="209"/>
        <end position="219"/>
    </location>
</feature>
<feature type="strand" evidence="20">
    <location>
        <begin position="221"/>
        <end position="223"/>
    </location>
</feature>
<feature type="strand" evidence="23">
    <location>
        <begin position="226"/>
        <end position="229"/>
    </location>
</feature>
<feature type="strand" evidence="20">
    <location>
        <begin position="232"/>
        <end position="239"/>
    </location>
</feature>
<feature type="turn" evidence="20">
    <location>
        <begin position="240"/>
        <end position="242"/>
    </location>
</feature>
<feature type="strand" evidence="20">
    <location>
        <begin position="245"/>
        <end position="251"/>
    </location>
</feature>
<feature type="helix" evidence="20">
    <location>
        <begin position="252"/>
        <end position="275"/>
    </location>
</feature>
<feature type="helix" evidence="20">
    <location>
        <begin position="279"/>
        <end position="288"/>
    </location>
</feature>
<feature type="strand" evidence="20">
    <location>
        <begin position="290"/>
        <end position="294"/>
    </location>
</feature>
<feature type="helix" evidence="20">
    <location>
        <begin position="295"/>
        <end position="298"/>
    </location>
</feature>
<feature type="helix" evidence="20">
    <location>
        <begin position="302"/>
        <end position="310"/>
    </location>
</feature>
<feature type="strand" evidence="20">
    <location>
        <begin position="314"/>
        <end position="316"/>
    </location>
</feature>
<feature type="helix" evidence="20">
    <location>
        <begin position="320"/>
        <end position="322"/>
    </location>
</feature>
<feature type="helix" evidence="20">
    <location>
        <begin position="323"/>
        <end position="333"/>
    </location>
</feature>
<feature type="turn" evidence="22">
    <location>
        <begin position="335"/>
        <end position="337"/>
    </location>
</feature>
<feature type="strand" evidence="22">
    <location>
        <begin position="343"/>
        <end position="346"/>
    </location>
</feature>
<keyword id="KW-0002">3D-structure</keyword>
<keyword id="KW-0067">ATP-binding</keyword>
<keyword id="KW-0133">Cell shape</keyword>
<keyword id="KW-0963">Cytoplasm</keyword>
<keyword id="KW-0547">Nucleotide-binding</keyword>
<keyword id="KW-1185">Reference proteome</keyword>
<dbReference type="EMBL" id="CP001340">
    <property type="protein sequence ID" value="ACL95077.1"/>
    <property type="molecule type" value="Genomic_DNA"/>
</dbReference>
<dbReference type="RefSeq" id="WP_010919417.1">
    <property type="nucleotide sequence ID" value="NC_011916.1"/>
</dbReference>
<dbReference type="RefSeq" id="YP_002516985.1">
    <property type="nucleotide sequence ID" value="NC_011916.1"/>
</dbReference>
<dbReference type="PDB" id="4CZE">
    <property type="method" value="X-ray"/>
    <property type="resolution" value="2.00 A"/>
    <property type="chains" value="A=9-347"/>
</dbReference>
<dbReference type="PDB" id="4CZF">
    <property type="method" value="X-ray"/>
    <property type="resolution" value="1.64 A"/>
    <property type="chains" value="A=9-347"/>
</dbReference>
<dbReference type="PDB" id="4CZG">
    <property type="method" value="X-ray"/>
    <property type="resolution" value="1.50 A"/>
    <property type="chains" value="A=9-347"/>
</dbReference>
<dbReference type="PDB" id="4CZH">
    <property type="method" value="X-ray"/>
    <property type="resolution" value="1.64 A"/>
    <property type="chains" value="A=9-347"/>
</dbReference>
<dbReference type="PDB" id="4CZI">
    <property type="method" value="X-ray"/>
    <property type="resolution" value="1.80 A"/>
    <property type="chains" value="A=9-347"/>
</dbReference>
<dbReference type="PDB" id="4CZJ">
    <property type="method" value="X-ray"/>
    <property type="resolution" value="2.00 A"/>
    <property type="chains" value="A/B=9-347"/>
</dbReference>
<dbReference type="PDB" id="4CZK">
    <property type="method" value="X-ray"/>
    <property type="resolution" value="2.60 A"/>
    <property type="chains" value="A=9-347"/>
</dbReference>
<dbReference type="PDB" id="4CZL">
    <property type="method" value="X-ray"/>
    <property type="resolution" value="1.60 A"/>
    <property type="chains" value="A=9-347"/>
</dbReference>
<dbReference type="PDB" id="4CZM">
    <property type="method" value="X-ray"/>
    <property type="resolution" value="2.20 A"/>
    <property type="chains" value="A/B=9-347"/>
</dbReference>
<dbReference type="PDBsum" id="4CZE"/>
<dbReference type="PDBsum" id="4CZF"/>
<dbReference type="PDBsum" id="4CZG"/>
<dbReference type="PDBsum" id="4CZH"/>
<dbReference type="PDBsum" id="4CZI"/>
<dbReference type="PDBsum" id="4CZJ"/>
<dbReference type="PDBsum" id="4CZK"/>
<dbReference type="PDBsum" id="4CZL"/>
<dbReference type="PDBsum" id="4CZM"/>
<dbReference type="SMR" id="A0A0H3C7V4"/>
<dbReference type="GeneID" id="7331590"/>
<dbReference type="KEGG" id="ccs:CCNA_01612"/>
<dbReference type="PATRIC" id="fig|565050.3.peg.1590"/>
<dbReference type="HOGENOM" id="CLU_052037_0_0_5"/>
<dbReference type="OrthoDB" id="9768127at2"/>
<dbReference type="PhylomeDB" id="A0A0H3C7V4"/>
<dbReference type="EvolutionaryTrace" id="A0A0H3C7V4"/>
<dbReference type="Proteomes" id="UP000001364">
    <property type="component" value="Chromosome"/>
</dbReference>
<dbReference type="GO" id="GO:0005737">
    <property type="term" value="C:cytoplasm"/>
    <property type="evidence" value="ECO:0007669"/>
    <property type="project" value="UniProtKB-SubCell"/>
</dbReference>
<dbReference type="GO" id="GO:0005524">
    <property type="term" value="F:ATP binding"/>
    <property type="evidence" value="ECO:0007669"/>
    <property type="project" value="UniProtKB-KW"/>
</dbReference>
<dbReference type="GO" id="GO:0000902">
    <property type="term" value="P:cell morphogenesis"/>
    <property type="evidence" value="ECO:0007669"/>
    <property type="project" value="InterPro"/>
</dbReference>
<dbReference type="GO" id="GO:0008360">
    <property type="term" value="P:regulation of cell shape"/>
    <property type="evidence" value="ECO:0007669"/>
    <property type="project" value="UniProtKB-UniRule"/>
</dbReference>
<dbReference type="CDD" id="cd10225">
    <property type="entry name" value="ASKHA_NBD_MreB-like"/>
    <property type="match status" value="1"/>
</dbReference>
<dbReference type="Gene3D" id="3.30.420.40">
    <property type="match status" value="2"/>
</dbReference>
<dbReference type="HAMAP" id="MF_02207">
    <property type="entry name" value="MreB"/>
    <property type="match status" value="1"/>
</dbReference>
<dbReference type="InterPro" id="IPR043129">
    <property type="entry name" value="ATPase_NBD"/>
</dbReference>
<dbReference type="InterPro" id="IPR004753">
    <property type="entry name" value="MreB"/>
</dbReference>
<dbReference type="InterPro" id="IPR056546">
    <property type="entry name" value="MreB_MamK-like"/>
</dbReference>
<dbReference type="NCBIfam" id="TIGR00904">
    <property type="entry name" value="mreB"/>
    <property type="match status" value="1"/>
</dbReference>
<dbReference type="NCBIfam" id="NF010539">
    <property type="entry name" value="PRK13927.1"/>
    <property type="match status" value="1"/>
</dbReference>
<dbReference type="PANTHER" id="PTHR42749">
    <property type="entry name" value="CELL SHAPE-DETERMINING PROTEIN MREB"/>
    <property type="match status" value="1"/>
</dbReference>
<dbReference type="PANTHER" id="PTHR42749:SF1">
    <property type="entry name" value="CELL SHAPE-DETERMINING PROTEIN MREB"/>
    <property type="match status" value="1"/>
</dbReference>
<dbReference type="Pfam" id="PF06723">
    <property type="entry name" value="MreB_Mbl"/>
    <property type="match status" value="1"/>
</dbReference>
<dbReference type="PRINTS" id="PR01652">
    <property type="entry name" value="SHAPEPROTEIN"/>
</dbReference>
<dbReference type="SUPFAM" id="SSF53067">
    <property type="entry name" value="Actin-like ATPase domain"/>
    <property type="match status" value="2"/>
</dbReference>
<proteinExistence type="evidence at protein level"/>
<comment type="function">
    <text evidence="1 3 4 5 6 8">Forms membrane-associated dynamic filaments that are essential for cell shape determination (PubMed:14982627, PubMed:17880425, PubMed:24843005). Acts by regulating cell wall synthesis and cell elongation, and thus cell shape (PubMed:14982627, PubMed:17880425). A feedback loop between cell geometry and MreB localization may maintain elongated cell shape by targeting cell wall growth to regions of negative cell wall curvature (By similarity). Required for mid-cell peptidoglycan synthesis and cell division. Directs the localization of the cytosolic peptidoglycan precursor-synthesizing enzyme MurG (PubMed:17880425). Also required for proper chromosome segregation (PubMed:15707892). Directs the segregation of origin-proximal but not origin-distal loci (PubMed:15707892).</text>
</comment>
<comment type="subunit">
    <text evidence="6">Forms polymers in the presence of ATP. Forms pairs of protofilaments that adopt an antiparallel arrangement and bind to lipids.</text>
</comment>
<comment type="subcellular location">
    <subcellularLocation>
        <location evidence="3">Cytoplasm</location>
    </subcellularLocation>
    <text evidence="3">Membrane-associated (PubMed:14982627). Localizes as bands or spirals that encircled the cell along its entire length and switches to a mid-cell location at a time that coincided with the initiation of cell division. Localization at mid-cell depends on FtsZ (PubMed:14982627).</text>
</comment>
<comment type="disruption phenotype">
    <text evidence="3">Depletion results in lemon-shaped cells that possess defects in the integrity of the cell wall.</text>
</comment>
<comment type="similarity">
    <text evidence="2 7">Belongs to the FtsA/MreB family.</text>
</comment>
<accession>A0A0H3C7V4</accession>
<evidence type="ECO:0000250" key="1">
    <source>
        <dbReference type="UniProtKB" id="P0A9X4"/>
    </source>
</evidence>
<evidence type="ECO:0000255" key="2">
    <source>
        <dbReference type="HAMAP-Rule" id="MF_02207"/>
    </source>
</evidence>
<evidence type="ECO:0000269" key="3">
    <source>
    </source>
</evidence>
<evidence type="ECO:0000269" key="4">
    <source>
    </source>
</evidence>
<evidence type="ECO:0000269" key="5">
    <source>
    </source>
</evidence>
<evidence type="ECO:0000269" key="6">
    <source>
    </source>
</evidence>
<evidence type="ECO:0000305" key="7"/>
<evidence type="ECO:0000305" key="8">
    <source>
    </source>
</evidence>
<evidence type="ECO:0000305" key="9">
    <source>
    </source>
</evidence>
<evidence type="ECO:0000312" key="10">
    <source>
        <dbReference type="EMBL" id="ACL95077.1"/>
    </source>
</evidence>
<evidence type="ECO:0007744" key="11">
    <source>
        <dbReference type="PDB" id="4CZE"/>
    </source>
</evidence>
<evidence type="ECO:0007744" key="12">
    <source>
        <dbReference type="PDB" id="4CZF"/>
    </source>
</evidence>
<evidence type="ECO:0007744" key="13">
    <source>
        <dbReference type="PDB" id="4CZG"/>
    </source>
</evidence>
<evidence type="ECO:0007744" key="14">
    <source>
        <dbReference type="PDB" id="4CZH"/>
    </source>
</evidence>
<evidence type="ECO:0007744" key="15">
    <source>
        <dbReference type="PDB" id="4CZI"/>
    </source>
</evidence>
<evidence type="ECO:0007744" key="16">
    <source>
        <dbReference type="PDB" id="4CZJ"/>
    </source>
</evidence>
<evidence type="ECO:0007744" key="17">
    <source>
        <dbReference type="PDB" id="4CZK"/>
    </source>
</evidence>
<evidence type="ECO:0007744" key="18">
    <source>
        <dbReference type="PDB" id="4CZL"/>
    </source>
</evidence>
<evidence type="ECO:0007744" key="19">
    <source>
        <dbReference type="PDB" id="4CZM"/>
    </source>
</evidence>
<evidence type="ECO:0007829" key="20">
    <source>
        <dbReference type="PDB" id="4CZG"/>
    </source>
</evidence>
<evidence type="ECO:0007829" key="21">
    <source>
        <dbReference type="PDB" id="4CZI"/>
    </source>
</evidence>
<evidence type="ECO:0007829" key="22">
    <source>
        <dbReference type="PDB" id="4CZL"/>
    </source>
</evidence>
<evidence type="ECO:0007829" key="23">
    <source>
        <dbReference type="PDB" id="4CZM"/>
    </source>
</evidence>
<protein>
    <recommendedName>
        <fullName evidence="2 7">Cell shape-determining protein MreB</fullName>
    </recommendedName>
    <alternativeName>
        <fullName evidence="7">Actin-like MreB protein</fullName>
    </alternativeName>
</protein>